<reference key="1">
    <citation type="journal article" date="1993" name="Biochem. Biophys. Res. Commun.">
        <title>Purification and characterization of a scorpion defensin, a 4kDa antibacterial peptide presenting structural similarities with insect defensins and scorpion toxins.</title>
        <authorList>
            <person name="Cociancich S."/>
            <person name="Goyffon M."/>
            <person name="Bontems F."/>
            <person name="Bulet P."/>
            <person name="Bouet F."/>
            <person name="Menez A."/>
            <person name="Hoffmann J.A."/>
        </authorList>
    </citation>
    <scope>PROTEIN SEQUENCE</scope>
    <scope>FUNCTION</scope>
    <source>
        <tissue>Hemolymph</tissue>
    </source>
</reference>
<name>DEF4_LEIHE</name>
<sequence length="38" mass="4326">GFGCPLNQGACHRHCRSIRRRGGYCAGFFKQTCTCYRN</sequence>
<keyword id="KW-0044">Antibiotic</keyword>
<keyword id="KW-0929">Antimicrobial</keyword>
<keyword id="KW-0211">Defensin</keyword>
<keyword id="KW-0903">Direct protein sequencing</keyword>
<keyword id="KW-1015">Disulfide bond</keyword>
<keyword id="KW-0964">Secreted</keyword>
<evidence type="ECO:0000250" key="1">
    <source>
        <dbReference type="UniProtKB" id="A0A384E0Y8"/>
    </source>
</evidence>
<evidence type="ECO:0000250" key="2">
    <source>
        <dbReference type="UniProtKB" id="P0DQT9"/>
    </source>
</evidence>
<evidence type="ECO:0000269" key="3">
    <source>
    </source>
</evidence>
<evidence type="ECO:0000303" key="4">
    <source>
    </source>
</evidence>
<evidence type="ECO:0000305" key="5"/>
<evidence type="ECO:0000305" key="6">
    <source>
    </source>
</evidence>
<accession>P41965</accession>
<protein>
    <recommendedName>
        <fullName evidence="6">4 kDa defensin</fullName>
    </recommendedName>
    <alternativeName>
        <fullName evidence="4">Antibacterial 4 kDa peptide</fullName>
    </alternativeName>
</protein>
<dbReference type="PIR" id="JN0613">
    <property type="entry name" value="JN0613"/>
</dbReference>
<dbReference type="SMR" id="P41965"/>
<dbReference type="GO" id="GO:0005576">
    <property type="term" value="C:extracellular region"/>
    <property type="evidence" value="ECO:0007669"/>
    <property type="project" value="UniProtKB-SubCell"/>
</dbReference>
<dbReference type="GO" id="GO:0042742">
    <property type="term" value="P:defense response to bacterium"/>
    <property type="evidence" value="ECO:0007669"/>
    <property type="project" value="UniProtKB-KW"/>
</dbReference>
<dbReference type="FunFam" id="3.30.30.10:FF:000006">
    <property type="entry name" value="Defensin DFS2"/>
    <property type="match status" value="1"/>
</dbReference>
<dbReference type="Gene3D" id="3.30.30.10">
    <property type="entry name" value="Knottin, scorpion toxin-like"/>
    <property type="match status" value="1"/>
</dbReference>
<dbReference type="InterPro" id="IPR001542">
    <property type="entry name" value="Defensin_invertebrate/fungal"/>
</dbReference>
<dbReference type="InterPro" id="IPR036574">
    <property type="entry name" value="Scorpion_toxin-like_sf"/>
</dbReference>
<dbReference type="Pfam" id="PF01097">
    <property type="entry name" value="Defensin_2"/>
    <property type="match status" value="1"/>
</dbReference>
<dbReference type="SUPFAM" id="SSF57095">
    <property type="entry name" value="Scorpion toxin-like"/>
    <property type="match status" value="1"/>
</dbReference>
<dbReference type="PROSITE" id="PS51378">
    <property type="entry name" value="INVERT_DEFENSINS"/>
    <property type="match status" value="1"/>
</dbReference>
<proteinExistence type="evidence at protein level"/>
<organism>
    <name type="scientific">Leiurus hebraeus</name>
    <name type="common">Hebrew deathstalker scorpion</name>
    <name type="synonym">Leiurus quinquestriatus hebraeus</name>
    <dbReference type="NCBI Taxonomy" id="2899558"/>
    <lineage>
        <taxon>Eukaryota</taxon>
        <taxon>Metazoa</taxon>
        <taxon>Ecdysozoa</taxon>
        <taxon>Arthropoda</taxon>
        <taxon>Chelicerata</taxon>
        <taxon>Arachnida</taxon>
        <taxon>Scorpiones</taxon>
        <taxon>Buthida</taxon>
        <taxon>Buthoidea</taxon>
        <taxon>Buthidae</taxon>
        <taxon>Leiurus</taxon>
    </lineage>
</organism>
<feature type="peptide" id="PRO_0000044712" description="4 kDa defensin">
    <location>
        <begin position="1"/>
        <end position="38"/>
    </location>
</feature>
<feature type="disulfide bond" evidence="1">
    <location>
        <begin position="4"/>
        <end position="25"/>
    </location>
</feature>
<feature type="disulfide bond" evidence="1">
    <location>
        <begin position="11"/>
        <end position="33"/>
    </location>
</feature>
<feature type="disulfide bond" evidence="1">
    <location>
        <begin position="15"/>
        <end position="35"/>
    </location>
</feature>
<comment type="function">
    <text evidence="2 3">Dual-function peptide with antimicrobial and potassium channel-blocking activities (By similarity). Shows inhibitory activity against Gram-positive bacteria such as M.luteus, S.aureus, B.subtilis, and M.luteus as well as methicillin-resistant S.aureus (MIC=0.1-20 uM) (By similarity) (PubMed:8333834). Does not act on bacteria by disrupting membranes (By similarity). Also moderately inhibits Kv1.1/KCNA1, Kv1.2/KCNA2, and Kv1.3/KCNA3 potassium channels (By similarity). Inhibits potassium channels by interacting with the pore region (By similarity). Does not show hemolytic activity (By similarity).</text>
</comment>
<comment type="subcellular location">
    <subcellularLocation>
        <location evidence="6">Secreted</location>
    </subcellularLocation>
</comment>
<comment type="domain">
    <text evidence="2">Has the structural arrangement of an alpha-helix connected to a beta-sheet by disulfide bonds (CSalpha/beta).</text>
</comment>
<comment type="similarity">
    <text evidence="5">Belongs to the invertebrate defensin family. Type 2 subfamily.</text>
</comment>